<evidence type="ECO:0000250" key="1">
    <source>
        <dbReference type="UniProtKB" id="P0DL09"/>
    </source>
</evidence>
<evidence type="ECO:0000255" key="2"/>
<evidence type="ECO:0000256" key="3">
    <source>
        <dbReference type="SAM" id="MobiDB-lite"/>
    </source>
</evidence>
<evidence type="ECO:0000269" key="4">
    <source>
    </source>
</evidence>
<evidence type="ECO:0000269" key="5">
    <source>
    </source>
</evidence>
<evidence type="ECO:0000269" key="6">
    <source>
    </source>
</evidence>
<evidence type="ECO:0000269" key="7">
    <source>
    </source>
</evidence>
<evidence type="ECO:0000269" key="8">
    <source>
    </source>
</evidence>
<evidence type="ECO:0000269" key="9">
    <source>
    </source>
</evidence>
<evidence type="ECO:0000269" key="10">
    <source>
    </source>
</evidence>
<evidence type="ECO:0000305" key="11"/>
<reference key="1">
    <citation type="journal article" date="2004" name="Nat. Genet.">
        <title>Complete sequencing and characterization of 21,243 full-length human cDNAs.</title>
        <authorList>
            <person name="Ota T."/>
            <person name="Suzuki Y."/>
            <person name="Nishikawa T."/>
            <person name="Otsuki T."/>
            <person name="Sugiyama T."/>
            <person name="Irie R."/>
            <person name="Wakamatsu A."/>
            <person name="Hayashi K."/>
            <person name="Sato H."/>
            <person name="Nagai K."/>
            <person name="Kimura K."/>
            <person name="Makita H."/>
            <person name="Sekine M."/>
            <person name="Obayashi M."/>
            <person name="Nishi T."/>
            <person name="Shibahara T."/>
            <person name="Tanaka T."/>
            <person name="Ishii S."/>
            <person name="Yamamoto J."/>
            <person name="Saito K."/>
            <person name="Kawai Y."/>
            <person name="Isono Y."/>
            <person name="Nakamura Y."/>
            <person name="Nagahari K."/>
            <person name="Murakami K."/>
            <person name="Yasuda T."/>
            <person name="Iwayanagi T."/>
            <person name="Wagatsuma M."/>
            <person name="Shiratori A."/>
            <person name="Sudo H."/>
            <person name="Hosoiri T."/>
            <person name="Kaku Y."/>
            <person name="Kodaira H."/>
            <person name="Kondo H."/>
            <person name="Sugawara M."/>
            <person name="Takahashi M."/>
            <person name="Kanda K."/>
            <person name="Yokoi T."/>
            <person name="Furuya T."/>
            <person name="Kikkawa E."/>
            <person name="Omura Y."/>
            <person name="Abe K."/>
            <person name="Kamihara K."/>
            <person name="Katsuta N."/>
            <person name="Sato K."/>
            <person name="Tanikawa M."/>
            <person name="Yamazaki M."/>
            <person name="Ninomiya K."/>
            <person name="Ishibashi T."/>
            <person name="Yamashita H."/>
            <person name="Murakawa K."/>
            <person name="Fujimori K."/>
            <person name="Tanai H."/>
            <person name="Kimata M."/>
            <person name="Watanabe M."/>
            <person name="Hiraoka S."/>
            <person name="Chiba Y."/>
            <person name="Ishida S."/>
            <person name="Ono Y."/>
            <person name="Takiguchi S."/>
            <person name="Watanabe S."/>
            <person name="Yosida M."/>
            <person name="Hotuta T."/>
            <person name="Kusano J."/>
            <person name="Kanehori K."/>
            <person name="Takahashi-Fujii A."/>
            <person name="Hara H."/>
            <person name="Tanase T.-O."/>
            <person name="Nomura Y."/>
            <person name="Togiya S."/>
            <person name="Komai F."/>
            <person name="Hara R."/>
            <person name="Takeuchi K."/>
            <person name="Arita M."/>
            <person name="Imose N."/>
            <person name="Musashino K."/>
            <person name="Yuuki H."/>
            <person name="Oshima A."/>
            <person name="Sasaki N."/>
            <person name="Aotsuka S."/>
            <person name="Yoshikawa Y."/>
            <person name="Matsunawa H."/>
            <person name="Ichihara T."/>
            <person name="Shiohata N."/>
            <person name="Sano S."/>
            <person name="Moriya S."/>
            <person name="Momiyama H."/>
            <person name="Satoh N."/>
            <person name="Takami S."/>
            <person name="Terashima Y."/>
            <person name="Suzuki O."/>
            <person name="Nakagawa S."/>
            <person name="Senoh A."/>
            <person name="Mizoguchi H."/>
            <person name="Goto Y."/>
            <person name="Shimizu F."/>
            <person name="Wakebe H."/>
            <person name="Hishigaki H."/>
            <person name="Watanabe T."/>
            <person name="Sugiyama A."/>
            <person name="Takemoto M."/>
            <person name="Kawakami B."/>
            <person name="Yamazaki M."/>
            <person name="Watanabe K."/>
            <person name="Kumagai A."/>
            <person name="Itakura S."/>
            <person name="Fukuzumi Y."/>
            <person name="Fujimori Y."/>
            <person name="Komiyama M."/>
            <person name="Tashiro H."/>
            <person name="Tanigami A."/>
            <person name="Fujiwara T."/>
            <person name="Ono T."/>
            <person name="Yamada K."/>
            <person name="Fujii Y."/>
            <person name="Ozaki K."/>
            <person name="Hirao M."/>
            <person name="Ohmori Y."/>
            <person name="Kawabata A."/>
            <person name="Hikiji T."/>
            <person name="Kobatake N."/>
            <person name="Inagaki H."/>
            <person name="Ikema Y."/>
            <person name="Okamoto S."/>
            <person name="Okitani R."/>
            <person name="Kawakami T."/>
            <person name="Noguchi S."/>
            <person name="Itoh T."/>
            <person name="Shigeta K."/>
            <person name="Senba T."/>
            <person name="Matsumura K."/>
            <person name="Nakajima Y."/>
            <person name="Mizuno T."/>
            <person name="Morinaga M."/>
            <person name="Sasaki M."/>
            <person name="Togashi T."/>
            <person name="Oyama M."/>
            <person name="Hata H."/>
            <person name="Watanabe M."/>
            <person name="Komatsu T."/>
            <person name="Mizushima-Sugano J."/>
            <person name="Satoh T."/>
            <person name="Shirai Y."/>
            <person name="Takahashi Y."/>
            <person name="Nakagawa K."/>
            <person name="Okumura K."/>
            <person name="Nagase T."/>
            <person name="Nomura N."/>
            <person name="Kikuchi H."/>
            <person name="Masuho Y."/>
            <person name="Yamashita R."/>
            <person name="Nakai K."/>
            <person name="Yada T."/>
            <person name="Nakamura Y."/>
            <person name="Ohara O."/>
            <person name="Isogai T."/>
            <person name="Sugano S."/>
        </authorList>
    </citation>
    <scope>NUCLEOTIDE SEQUENCE [LARGE SCALE MRNA]</scope>
    <scope>VARIANT ARG-399</scope>
    <source>
        <tissue>Hippocampus</tissue>
        <tissue>Testis</tissue>
    </source>
</reference>
<reference key="2">
    <citation type="journal article" date="2005" name="Nature">
        <title>Generation and annotation of the DNA sequences of human chromosomes 2 and 4.</title>
        <authorList>
            <person name="Hillier L.W."/>
            <person name="Graves T.A."/>
            <person name="Fulton R.S."/>
            <person name="Fulton L.A."/>
            <person name="Pepin K.H."/>
            <person name="Minx P."/>
            <person name="Wagner-McPherson C."/>
            <person name="Layman D."/>
            <person name="Wylie K."/>
            <person name="Sekhon M."/>
            <person name="Becker M.C."/>
            <person name="Fewell G.A."/>
            <person name="Delehaunty K.D."/>
            <person name="Miner T.L."/>
            <person name="Nash W.E."/>
            <person name="Kremitzki C."/>
            <person name="Oddy L."/>
            <person name="Du H."/>
            <person name="Sun H."/>
            <person name="Bradshaw-Cordum H."/>
            <person name="Ali J."/>
            <person name="Carter J."/>
            <person name="Cordes M."/>
            <person name="Harris A."/>
            <person name="Isak A."/>
            <person name="van Brunt A."/>
            <person name="Nguyen C."/>
            <person name="Du F."/>
            <person name="Courtney L."/>
            <person name="Kalicki J."/>
            <person name="Ozersky P."/>
            <person name="Abbott S."/>
            <person name="Armstrong J."/>
            <person name="Belter E.A."/>
            <person name="Caruso L."/>
            <person name="Cedroni M."/>
            <person name="Cotton M."/>
            <person name="Davidson T."/>
            <person name="Desai A."/>
            <person name="Elliott G."/>
            <person name="Erb T."/>
            <person name="Fronick C."/>
            <person name="Gaige T."/>
            <person name="Haakenson W."/>
            <person name="Haglund K."/>
            <person name="Holmes A."/>
            <person name="Harkins R."/>
            <person name="Kim K."/>
            <person name="Kruchowski S.S."/>
            <person name="Strong C.M."/>
            <person name="Grewal N."/>
            <person name="Goyea E."/>
            <person name="Hou S."/>
            <person name="Levy A."/>
            <person name="Martinka S."/>
            <person name="Mead K."/>
            <person name="McLellan M.D."/>
            <person name="Meyer R."/>
            <person name="Randall-Maher J."/>
            <person name="Tomlinson C."/>
            <person name="Dauphin-Kohlberg S."/>
            <person name="Kozlowicz-Reilly A."/>
            <person name="Shah N."/>
            <person name="Swearengen-Shahid S."/>
            <person name="Snider J."/>
            <person name="Strong J.T."/>
            <person name="Thompson J."/>
            <person name="Yoakum M."/>
            <person name="Leonard S."/>
            <person name="Pearman C."/>
            <person name="Trani L."/>
            <person name="Radionenko M."/>
            <person name="Waligorski J.E."/>
            <person name="Wang C."/>
            <person name="Rock S.M."/>
            <person name="Tin-Wollam A.-M."/>
            <person name="Maupin R."/>
            <person name="Latreille P."/>
            <person name="Wendl M.C."/>
            <person name="Yang S.-P."/>
            <person name="Pohl C."/>
            <person name="Wallis J.W."/>
            <person name="Spieth J."/>
            <person name="Bieri T.A."/>
            <person name="Berkowicz N."/>
            <person name="Nelson J.O."/>
            <person name="Osborne J."/>
            <person name="Ding L."/>
            <person name="Meyer R."/>
            <person name="Sabo A."/>
            <person name="Shotland Y."/>
            <person name="Sinha P."/>
            <person name="Wohldmann P.E."/>
            <person name="Cook L.L."/>
            <person name="Hickenbotham M.T."/>
            <person name="Eldred J."/>
            <person name="Williams D."/>
            <person name="Jones T.A."/>
            <person name="She X."/>
            <person name="Ciccarelli F.D."/>
            <person name="Izaurralde E."/>
            <person name="Taylor J."/>
            <person name="Schmutz J."/>
            <person name="Myers R.M."/>
            <person name="Cox D.R."/>
            <person name="Huang X."/>
            <person name="McPherson J.D."/>
            <person name="Mardis E.R."/>
            <person name="Clifton S.W."/>
            <person name="Warren W.C."/>
            <person name="Chinwalla A.T."/>
            <person name="Eddy S.R."/>
            <person name="Marra M.A."/>
            <person name="Ovcharenko I."/>
            <person name="Furey T.S."/>
            <person name="Miller W."/>
            <person name="Eichler E.E."/>
            <person name="Bork P."/>
            <person name="Suyama M."/>
            <person name="Torrents D."/>
            <person name="Waterston R.H."/>
            <person name="Wilson R.K."/>
        </authorList>
    </citation>
    <scope>NUCLEOTIDE SEQUENCE [LARGE SCALE GENOMIC DNA]</scope>
</reference>
<reference key="3">
    <citation type="journal article" date="2007" name="BMC Genomics">
        <title>The full-ORF clone resource of the German cDNA consortium.</title>
        <authorList>
            <person name="Bechtel S."/>
            <person name="Rosenfelder H."/>
            <person name="Duda A."/>
            <person name="Schmidt C.P."/>
            <person name="Ernst U."/>
            <person name="Wellenreuther R."/>
            <person name="Mehrle A."/>
            <person name="Schuster C."/>
            <person name="Bahr A."/>
            <person name="Bloecker H."/>
            <person name="Heubner D."/>
            <person name="Hoerlein A."/>
            <person name="Michel G."/>
            <person name="Wedler H."/>
            <person name="Koehrer K."/>
            <person name="Ottenwaelder B."/>
            <person name="Poustka A."/>
            <person name="Wiemann S."/>
            <person name="Schupp I."/>
        </authorList>
    </citation>
    <scope>NUCLEOTIDE SEQUENCE [LARGE SCALE MRNA] OF 64-740</scope>
    <scope>VARIANTS GLU-357 AND ARG-399</scope>
    <source>
        <tissue>Testis</tissue>
    </source>
</reference>
<reference key="4">
    <citation type="journal article" date="2013" name="Nat. Genet.">
        <title>The nexin-dynein regulatory complex subunit DRC1 is essential for motile cilia function in algae and humans.</title>
        <authorList>
            <person name="Wirschell M."/>
            <person name="Olbrich H."/>
            <person name="Werner C."/>
            <person name="Tritschler D."/>
            <person name="Bower R."/>
            <person name="Sale W.S."/>
            <person name="Loges N.T."/>
            <person name="Pennekamp P."/>
            <person name="Lindberg S."/>
            <person name="Stenram U."/>
            <person name="Carlen B."/>
            <person name="Horak E."/>
            <person name="Kohler G."/>
            <person name="Nurnberg P."/>
            <person name="Nurnberg G."/>
            <person name="Porter M.E."/>
            <person name="Omran H."/>
        </authorList>
    </citation>
    <scope>FUNCTION</scope>
    <scope>INVOLVEMENT IN CILD21</scope>
    <scope>VARIANTS CILD21 118-GLN--LYS-740 DEL AND 686-LYS--LYS-740 DEL</scope>
</reference>
<reference key="5">
    <citation type="journal article" date="2014" name="Eur. Respir. J.">
        <title>Ciliary beat pattern and frequency in genetic variants of primary ciliary dyskinesia.</title>
        <authorList>
            <person name="Raidt J."/>
            <person name="Wallmeier J."/>
            <person name="Hjeij R."/>
            <person name="Onnebrink J.G."/>
            <person name="Pennekamp P."/>
            <person name="Loges N.T."/>
            <person name="Olbrich H."/>
            <person name="Haeffner K."/>
            <person name="Dougherty G.W."/>
            <person name="Omran H."/>
            <person name="Werner C."/>
        </authorList>
    </citation>
    <scope>INVOLVEMENT IN CILD21</scope>
</reference>
<reference key="6">
    <citation type="journal article" date="2021" name="Hum. Mol. Genet.">
        <title>Loss of DRC1 function leads to multiple morphological abnormalities of the sperm flagella and male infertility in human and mouse.</title>
        <authorList>
            <person name="Zhang J."/>
            <person name="He X."/>
            <person name="Wu H."/>
            <person name="Zhang X."/>
            <person name="Yang S."/>
            <person name="Liu C."/>
            <person name="Liu S."/>
            <person name="Hua R."/>
            <person name="Zhou S."/>
            <person name="Zhao S."/>
            <person name="Hu F."/>
            <person name="Zhang J."/>
            <person name="Liu W."/>
            <person name="Cheng H."/>
            <person name="Gao Y."/>
            <person name="Zhang F."/>
            <person name="Cao Y."/>
            <person name="Liu M."/>
        </authorList>
    </citation>
    <scope>FUNCTION</scope>
    <scope>INTERACTION WITH CCDC65; DRC3; GAS8 AND TCTE1</scope>
    <scope>VARIANTS SPGF80 80-ARG--LYS-740 DEL AND 554-ARG--LYS-740 DEL</scope>
    <scope>CHARACTERIZATION OF VARIANT SPGF80 554-ARG--LYS-740 DEL</scope>
</reference>
<reference key="7">
    <citation type="journal article" date="2022" name="Front. Genet.">
        <title>Case Report: Whole-exome sequencing-based copy number variation analysis identified a novel DRC1 homozygous exon deletion in a patient with primary ciliary dyskinesia.</title>
        <authorList>
            <person name="Liu Y."/>
            <person name="Lei C."/>
            <person name="Wang R."/>
            <person name="Yang D."/>
            <person name="Yang B."/>
            <person name="Xu Y."/>
            <person name="Lu C."/>
            <person name="Wang L."/>
            <person name="Ding S."/>
            <person name="Guo T."/>
            <person name="Liu S."/>
            <person name="Luo H."/>
        </authorList>
    </citation>
    <scope>INVOLVEMENT IN CILD21</scope>
</reference>
<reference key="8">
    <citation type="journal article" date="2022" name="J. Hum. Genet.">
        <title>DRC1 deficiency caused primary ciliary dyskinesia and MMAF in a Chinese patient.</title>
        <authorList>
            <person name="Lei C."/>
            <person name="Yang D."/>
            <person name="Wang R."/>
            <person name="Ding S."/>
            <person name="Wang L."/>
            <person name="Guo T."/>
            <person name="Luo H."/>
        </authorList>
    </citation>
    <scope>VARIANT CILD21 432-TRP--LYS-740 DEL</scope>
</reference>
<dbReference type="EMBL" id="AK057222">
    <property type="protein sequence ID" value="BAB71385.1"/>
    <property type="molecule type" value="mRNA"/>
</dbReference>
<dbReference type="EMBL" id="AK289953">
    <property type="protein sequence ID" value="BAF82642.1"/>
    <property type="molecule type" value="mRNA"/>
</dbReference>
<dbReference type="EMBL" id="AC010896">
    <property type="protein sequence ID" value="AAY14647.1"/>
    <property type="molecule type" value="Genomic_DNA"/>
</dbReference>
<dbReference type="EMBL" id="AC093378">
    <property type="protein sequence ID" value="AAY15082.1"/>
    <property type="molecule type" value="Genomic_DNA"/>
</dbReference>
<dbReference type="EMBL" id="AL833892">
    <property type="protein sequence ID" value="CAD38748.1"/>
    <property type="molecule type" value="mRNA"/>
</dbReference>
<dbReference type="CCDS" id="CCDS1723.1"/>
<dbReference type="RefSeq" id="NP_659475.2">
    <property type="nucleotide sequence ID" value="NM_145038.5"/>
</dbReference>
<dbReference type="PDB" id="8J07">
    <property type="method" value="EM"/>
    <property type="resolution" value="4.10 A"/>
    <property type="chains" value="1=1-740"/>
</dbReference>
<dbReference type="PDBsum" id="8J07"/>
<dbReference type="EMDB" id="EMD-35888"/>
<dbReference type="SMR" id="Q96MC2"/>
<dbReference type="BioGRID" id="124976">
    <property type="interactions" value="9"/>
</dbReference>
<dbReference type="ComplexPortal" id="CPX-8086">
    <property type="entry name" value="Nexin-dynein regulatory complex"/>
</dbReference>
<dbReference type="FunCoup" id="Q96MC2">
    <property type="interactions" value="117"/>
</dbReference>
<dbReference type="IntAct" id="Q96MC2">
    <property type="interactions" value="4"/>
</dbReference>
<dbReference type="STRING" id="9606.ENSP00000288710"/>
<dbReference type="GlyCosmos" id="Q96MC2">
    <property type="glycosylation" value="1 site, 1 glycan"/>
</dbReference>
<dbReference type="GlyGen" id="Q96MC2">
    <property type="glycosylation" value="1 site, 1 O-linked glycan (1 site)"/>
</dbReference>
<dbReference type="iPTMnet" id="Q96MC2"/>
<dbReference type="PhosphoSitePlus" id="Q96MC2"/>
<dbReference type="BioMuta" id="DRC1"/>
<dbReference type="DMDM" id="126215680"/>
<dbReference type="jPOST" id="Q96MC2"/>
<dbReference type="MassIVE" id="Q96MC2"/>
<dbReference type="PaxDb" id="9606-ENSP00000288710"/>
<dbReference type="PeptideAtlas" id="Q96MC2"/>
<dbReference type="ProteomicsDB" id="77330"/>
<dbReference type="Antibodypedia" id="55104">
    <property type="antibodies" value="31 antibodies from 3 providers"/>
</dbReference>
<dbReference type="DNASU" id="92749"/>
<dbReference type="Ensembl" id="ENST00000288710.7">
    <property type="protein sequence ID" value="ENSP00000288710.2"/>
    <property type="gene ID" value="ENSG00000157856.12"/>
</dbReference>
<dbReference type="GeneID" id="92749"/>
<dbReference type="KEGG" id="hsa:92749"/>
<dbReference type="MANE-Select" id="ENST00000288710.7">
    <property type="protein sequence ID" value="ENSP00000288710.2"/>
    <property type="RefSeq nucleotide sequence ID" value="NM_145038.5"/>
    <property type="RefSeq protein sequence ID" value="NP_659475.2"/>
</dbReference>
<dbReference type="UCSC" id="uc002rhg.2">
    <property type="organism name" value="human"/>
</dbReference>
<dbReference type="AGR" id="HGNC:24245"/>
<dbReference type="CTD" id="92749"/>
<dbReference type="DisGeNET" id="92749"/>
<dbReference type="GeneCards" id="DRC1"/>
<dbReference type="GeneReviews" id="DRC1"/>
<dbReference type="HGNC" id="HGNC:24245">
    <property type="gene designation" value="DRC1"/>
</dbReference>
<dbReference type="HPA" id="ENSG00000157856">
    <property type="expression patterns" value="Group enriched (choroid plexus, fallopian tube, testis)"/>
</dbReference>
<dbReference type="MalaCards" id="DRC1"/>
<dbReference type="MIM" id="615288">
    <property type="type" value="gene"/>
</dbReference>
<dbReference type="MIM" id="615294">
    <property type="type" value="phenotype"/>
</dbReference>
<dbReference type="MIM" id="620222">
    <property type="type" value="phenotype"/>
</dbReference>
<dbReference type="neXtProt" id="NX_Q96MC2"/>
<dbReference type="OpenTargets" id="ENSG00000157856"/>
<dbReference type="Orphanet" id="276234">
    <property type="disease" value="Non-syndromic male infertility due to sperm motility disorder"/>
</dbReference>
<dbReference type="Orphanet" id="244">
    <property type="disease" value="Primary ciliary dyskinesia"/>
</dbReference>
<dbReference type="PharmGKB" id="PA145149775"/>
<dbReference type="VEuPathDB" id="HostDB:ENSG00000157856"/>
<dbReference type="eggNOG" id="ENOG502QQ2B">
    <property type="taxonomic scope" value="Eukaryota"/>
</dbReference>
<dbReference type="GeneTree" id="ENSGT00940000153804"/>
<dbReference type="HOGENOM" id="CLU_012489_1_0_1"/>
<dbReference type="InParanoid" id="Q96MC2"/>
<dbReference type="OMA" id="LDFMMAR"/>
<dbReference type="OrthoDB" id="10260459at2759"/>
<dbReference type="PAN-GO" id="Q96MC2">
    <property type="GO annotations" value="4 GO annotations based on evolutionary models"/>
</dbReference>
<dbReference type="PhylomeDB" id="Q96MC2"/>
<dbReference type="TreeFam" id="TF324985"/>
<dbReference type="PathwayCommons" id="Q96MC2"/>
<dbReference type="SignaLink" id="Q96MC2"/>
<dbReference type="BioGRID-ORCS" id="92749">
    <property type="hits" value="15 hits in 1138 CRISPR screens"/>
</dbReference>
<dbReference type="ChiTaRS" id="DRC1">
    <property type="organism name" value="human"/>
</dbReference>
<dbReference type="GenomeRNAi" id="92749"/>
<dbReference type="Pharos" id="Q96MC2">
    <property type="development level" value="Tbio"/>
</dbReference>
<dbReference type="PRO" id="PR:Q96MC2"/>
<dbReference type="Proteomes" id="UP000005640">
    <property type="component" value="Chromosome 2"/>
</dbReference>
<dbReference type="RNAct" id="Q96MC2">
    <property type="molecule type" value="protein"/>
</dbReference>
<dbReference type="Bgee" id="ENSG00000157856">
    <property type="expression patterns" value="Expressed in right uterine tube and 106 other cell types or tissues"/>
</dbReference>
<dbReference type="ExpressionAtlas" id="Q96MC2">
    <property type="expression patterns" value="baseline and differential"/>
</dbReference>
<dbReference type="GO" id="GO:0005858">
    <property type="term" value="C:axonemal dynein complex"/>
    <property type="evidence" value="ECO:0007669"/>
    <property type="project" value="InterPro"/>
</dbReference>
<dbReference type="GO" id="GO:0005930">
    <property type="term" value="C:axoneme"/>
    <property type="evidence" value="ECO:0000250"/>
    <property type="project" value="UniProtKB"/>
</dbReference>
<dbReference type="GO" id="GO:0005829">
    <property type="term" value="C:cytosol"/>
    <property type="evidence" value="ECO:0007669"/>
    <property type="project" value="Ensembl"/>
</dbReference>
<dbReference type="GO" id="GO:0005576">
    <property type="term" value="C:extracellular region"/>
    <property type="evidence" value="ECO:0007669"/>
    <property type="project" value="GOC"/>
</dbReference>
<dbReference type="GO" id="GO:0036126">
    <property type="term" value="C:sperm flagellum"/>
    <property type="evidence" value="ECO:0007669"/>
    <property type="project" value="Ensembl"/>
</dbReference>
<dbReference type="GO" id="GO:0070286">
    <property type="term" value="P:axonemal dynein complex assembly"/>
    <property type="evidence" value="ECO:0000315"/>
    <property type="project" value="UniProtKB"/>
</dbReference>
<dbReference type="GO" id="GO:0060285">
    <property type="term" value="P:cilium-dependent cell motility"/>
    <property type="evidence" value="ECO:0000315"/>
    <property type="project" value="UniProtKB"/>
</dbReference>
<dbReference type="GO" id="GO:0007368">
    <property type="term" value="P:determination of left/right symmetry"/>
    <property type="evidence" value="ECO:0007669"/>
    <property type="project" value="Ensembl"/>
</dbReference>
<dbReference type="GO" id="GO:0007507">
    <property type="term" value="P:heart development"/>
    <property type="evidence" value="ECO:0007669"/>
    <property type="project" value="Ensembl"/>
</dbReference>
<dbReference type="GO" id="GO:0120197">
    <property type="term" value="P:mucociliary clearance"/>
    <property type="evidence" value="ECO:0007669"/>
    <property type="project" value="Ensembl"/>
</dbReference>
<dbReference type="GO" id="GO:0003352">
    <property type="term" value="P:regulation of cilium movement"/>
    <property type="evidence" value="ECO:0000318"/>
    <property type="project" value="GO_Central"/>
</dbReference>
<dbReference type="GO" id="GO:0007338">
    <property type="term" value="P:single fertilization"/>
    <property type="evidence" value="ECO:0007669"/>
    <property type="project" value="Ensembl"/>
</dbReference>
<dbReference type="GO" id="GO:0120316">
    <property type="term" value="P:sperm flagellum assembly"/>
    <property type="evidence" value="ECO:0007669"/>
    <property type="project" value="Ensembl"/>
</dbReference>
<dbReference type="InterPro" id="IPR039505">
    <property type="entry name" value="DRC1/2_N"/>
</dbReference>
<dbReference type="InterPro" id="IPR039750">
    <property type="entry name" value="DRC1/DRC2"/>
</dbReference>
<dbReference type="InterPro" id="IPR029440">
    <property type="entry name" value="DRC1_C"/>
</dbReference>
<dbReference type="PANTHER" id="PTHR21625:SF1">
    <property type="entry name" value="DYNEIN REGULATORY COMPLEX PROTEIN 1"/>
    <property type="match status" value="1"/>
</dbReference>
<dbReference type="PANTHER" id="PTHR21625">
    <property type="entry name" value="NYD-SP28 PROTEIN"/>
    <property type="match status" value="1"/>
</dbReference>
<dbReference type="Pfam" id="PF14772">
    <property type="entry name" value="NYD-SP28"/>
    <property type="match status" value="1"/>
</dbReference>
<dbReference type="Pfam" id="PF14775">
    <property type="entry name" value="NYD-SP28_assoc"/>
    <property type="match status" value="1"/>
</dbReference>
<keyword id="KW-0002">3D-structure</keyword>
<keyword id="KW-0966">Cell projection</keyword>
<keyword id="KW-1186">Ciliopathy</keyword>
<keyword id="KW-0969">Cilium</keyword>
<keyword id="KW-0175">Coiled coil</keyword>
<keyword id="KW-0963">Cytoplasm</keyword>
<keyword id="KW-0206">Cytoskeleton</keyword>
<keyword id="KW-0225">Disease variant</keyword>
<keyword id="KW-0282">Flagellum</keyword>
<keyword id="KW-0990">Primary ciliary dyskinesia</keyword>
<keyword id="KW-1267">Proteomics identification</keyword>
<keyword id="KW-1185">Reference proteome</keyword>
<comment type="function">
    <text evidence="1 6 8">Component of the nexin-dynein regulatory complex (N-DRC) a key regulator of ciliary/flagellar motility which maintains the alignment and integrity of the distal axoneme and regulates microtubule sliding in motile axonemes (By similarity). Plays a critical role in the assembly of N-DRC and also stabilizes the assembly of multiple inner dynein arms and radial spokes (PubMed:23354437, PubMed:34169321). Coassembles with CCDC65/DRC2 to form a central scaffold needed for assembly of the N-DRC and its attachment to the outer doublet microtubules (PubMed:23354437).</text>
</comment>
<comment type="subunit">
    <text evidence="1 8">Component of the nexin-dynein regulatory complex (N-DRC). Interacts with CCDC65/DRC2, DRC3, GAS8/DRC4 and TCTE1/DRC5 (PubMed:34169321).</text>
</comment>
<comment type="subcellular location">
    <subcellularLocation>
        <location evidence="1">Cytoplasm</location>
        <location evidence="1">Cytoskeleton</location>
        <location evidence="1">Cilium axoneme</location>
    </subcellularLocation>
    <subcellularLocation>
        <location evidence="1">Cytoplasm</location>
        <location evidence="1">Cytoskeleton</location>
        <location evidence="1">Flagellum axoneme</location>
    </subcellularLocation>
</comment>
<comment type="disease" evidence="6 7 9 10">
    <disease id="DI-03807">
        <name>Ciliary dyskinesia, primary, 21</name>
        <acronym>CILD21</acronym>
        <description>A disorder characterized by abnormalities of motile cilia. Respiratory infections leading to chronic inflammation and bronchiectasis are recurrent, due to defects in the respiratory cilia. Patients may exhibit randomization of left-right body asymmetry and situs inversus, due to dysfunction of monocilia at the embryonic node. Primary ciliary dyskinesia associated with situs inversus is referred to as Kartagener syndrome.</description>
        <dbReference type="MIM" id="615294"/>
    </disease>
    <text>The disease is caused by variants affecting the gene represented in this entry.</text>
</comment>
<comment type="disease" evidence="8">
    <disease id="DI-06580">
        <name>Spermatogenic failure 80</name>
        <acronym>SPGF80</acronym>
        <description>An autosomal recessive, male infertility disorder characterized by reduced or absent progressive sperm motility due to multiple morphologic abnormalities of the flagella, including short, coiled, absent, and irregular-caliber flagella.</description>
        <dbReference type="MIM" id="620222"/>
    </disease>
    <text>The disease is caused by variants affecting the gene represented in this entry.</text>
</comment>
<comment type="similarity">
    <text evidence="11">Belongs to the DRC1 family.</text>
</comment>
<proteinExistence type="evidence at protein level"/>
<accession>Q96MC2</accession>
<accession>A8K1N8</accession>
<accession>Q53R91</accession>
<accession>Q53TA3</accession>
<accession>Q8NDI5</accession>
<sequence length="740" mass="87134">MNPPGSLEALDPNVDEHLSTQILAPSVHSDNSQERIQARRLRIAARLEARRREALGEYLDGKKESEEDQSKSYKQKEESRLKLAKLLLCGTELVTNIQVAIDIREIHRRVEEEEIKRQRIEKLENEVKTSQDKFDEITSKWEEGKQKRIPQELWEMLNTQQLHCAGLLEDKNKLISELQQELKTKDDQYVKDLKKQSDDICLLLERMEEQVKNVMKTFREELYNIEKAFEVERQELLASNKKKWEQALQAHNAKELEYLNNRMKKVEDYEKQLNRQRIWDCEEYNMIKIKLEQDVQILEQQLQQRKAIYQLNQEKLEYNLQVLKKRDEESTVIKSQQKRKINRLHDILNNLRSKYAKQIKQFQEENQSLTSDYKRLVMQFKELQKAMRHFALIDDEKFWEIWLMNEEEAKDLIARAFDVDRIIHTHHLGLPWAAPDFWFLNNVGPISQQPQKSATQIVEEMLMRSEEEEAEEAAAEPESYLDLPKQISEKTTKRILMLLCDESGFLIESKLLSLLLPLEQNECYLLRLDAIFSALGIESEDDLYKLVNFFLKYRAHRLSSSLQIKPCSQASMEKASMEETSTRSELELAEQTEMEGEKEESLVEGEKEEEEETPPSPWVIHPNDVLKILEAFVMGLKKPRDSRAPLRVQKNVRDNSKDSEYWQALTTVIPSSKQNLWDALYTALEKYHLVLTQRAKLLLENSSLEQQNTELQALLQQYLNSKINSELQVPPTQVLRVPTK</sequence>
<name>DRC1_HUMAN</name>
<organism>
    <name type="scientific">Homo sapiens</name>
    <name type="common">Human</name>
    <dbReference type="NCBI Taxonomy" id="9606"/>
    <lineage>
        <taxon>Eukaryota</taxon>
        <taxon>Metazoa</taxon>
        <taxon>Chordata</taxon>
        <taxon>Craniata</taxon>
        <taxon>Vertebrata</taxon>
        <taxon>Euteleostomi</taxon>
        <taxon>Mammalia</taxon>
        <taxon>Eutheria</taxon>
        <taxon>Euarchontoglires</taxon>
        <taxon>Primates</taxon>
        <taxon>Haplorrhini</taxon>
        <taxon>Catarrhini</taxon>
        <taxon>Hominidae</taxon>
        <taxon>Homo</taxon>
    </lineage>
</organism>
<protein>
    <recommendedName>
        <fullName>Dynein regulatory complex protein 1</fullName>
    </recommendedName>
    <alternativeName>
        <fullName>Coiled-coil domain-containing protein 164</fullName>
    </alternativeName>
</protein>
<feature type="chain" id="PRO_0000277881" description="Dynein regulatory complex protein 1">
    <location>
        <begin position="1"/>
        <end position="740"/>
    </location>
</feature>
<feature type="region of interest" description="Disordered" evidence="3">
    <location>
        <begin position="570"/>
        <end position="617"/>
    </location>
</feature>
<feature type="coiled-coil region" evidence="2">
    <location>
        <begin position="101"/>
        <end position="388"/>
    </location>
</feature>
<feature type="coiled-coil region" evidence="2">
    <location>
        <begin position="691"/>
        <end position="724"/>
    </location>
</feature>
<feature type="compositionally biased region" description="Basic and acidic residues" evidence="3">
    <location>
        <begin position="575"/>
        <end position="586"/>
    </location>
</feature>
<feature type="compositionally biased region" description="Acidic residues" evidence="3">
    <location>
        <begin position="587"/>
        <end position="598"/>
    </location>
</feature>
<feature type="sequence variant" id="VAR_087935" description="In SPGF80." evidence="8">
    <location>
        <begin position="80"/>
        <end position="740"/>
    </location>
</feature>
<feature type="sequence variant" id="VAR_087936" description="In CILD21." evidence="6">
    <location>
        <begin position="118"/>
        <end position="740"/>
    </location>
</feature>
<feature type="sequence variant" id="VAR_030625" description="In dbSNP:rs3795958." evidence="5">
    <original>K</original>
    <variation>E</variation>
    <location>
        <position position="357"/>
    </location>
</feature>
<feature type="sequence variant" id="VAR_030626" description="In dbSNP:rs939820." evidence="4 5">
    <original>W</original>
    <variation>R</variation>
    <location>
        <position position="399"/>
    </location>
</feature>
<feature type="sequence variant" id="VAR_087937" description="In CILD21; multiple flagellar abnormalities are present in patient sperm." evidence="9">
    <location>
        <begin position="432"/>
        <end position="740"/>
    </location>
</feature>
<feature type="sequence variant" id="VAR_087938" description="In SPGF80; no protein detected in a homozygous patient sperm." evidence="8">
    <location>
        <begin position="554"/>
        <end position="740"/>
    </location>
</feature>
<feature type="sequence variant" id="VAR_030627" description="In dbSNP:rs12623642.">
    <original>V</original>
    <variation>F</variation>
    <location>
        <position position="633"/>
    </location>
</feature>
<feature type="sequence variant" id="VAR_087939" description="In CILD21." evidence="6">
    <location>
        <begin position="686"/>
        <end position="740"/>
    </location>
</feature>
<feature type="sequence variant" id="VAR_030628" description="In dbSNP:rs3172008.">
    <original>S</original>
    <variation>I</variation>
    <location>
        <position position="702"/>
    </location>
</feature>
<feature type="sequence variant" id="VAR_057758" description="In dbSNP:rs35313480.">
    <original>V</original>
    <variation>M</variation>
    <location>
        <position position="734"/>
    </location>
</feature>
<feature type="sequence conflict" description="In Ref. 1; BAF82642." evidence="11" ref="1">
    <original>N</original>
    <variation>D</variation>
    <location>
        <position position="342"/>
    </location>
</feature>
<feature type="sequence conflict" description="In Ref. 1; BAF82642." evidence="11" ref="1">
    <original>Q</original>
    <variation>P</variation>
    <location>
        <position position="716"/>
    </location>
</feature>
<gene>
    <name type="primary">DRC1</name>
    <name type="synonym">C2orf39</name>
    <name type="synonym">CCDC164</name>
</gene>